<feature type="chain" id="PRO_0000061642" description="Cytochrome b">
    <location>
        <begin position="1"/>
        <end position="379"/>
    </location>
</feature>
<feature type="transmembrane region" description="Helical" evidence="2">
    <location>
        <begin position="33"/>
        <end position="53"/>
    </location>
</feature>
<feature type="transmembrane region" description="Helical" evidence="2">
    <location>
        <begin position="77"/>
        <end position="98"/>
    </location>
</feature>
<feature type="transmembrane region" description="Helical" evidence="2">
    <location>
        <begin position="113"/>
        <end position="133"/>
    </location>
</feature>
<feature type="transmembrane region" description="Helical" evidence="2">
    <location>
        <begin position="178"/>
        <end position="198"/>
    </location>
</feature>
<feature type="transmembrane region" description="Helical" evidence="2">
    <location>
        <begin position="226"/>
        <end position="246"/>
    </location>
</feature>
<feature type="transmembrane region" description="Helical" evidence="2">
    <location>
        <begin position="288"/>
        <end position="308"/>
    </location>
</feature>
<feature type="transmembrane region" description="Helical" evidence="2">
    <location>
        <begin position="320"/>
        <end position="340"/>
    </location>
</feature>
<feature type="transmembrane region" description="Helical" evidence="2">
    <location>
        <begin position="347"/>
        <end position="367"/>
    </location>
</feature>
<feature type="binding site" description="axial binding residue" evidence="2">
    <location>
        <position position="83"/>
    </location>
    <ligand>
        <name>heme b</name>
        <dbReference type="ChEBI" id="CHEBI:60344"/>
        <label>b562</label>
    </ligand>
    <ligandPart>
        <name>Fe</name>
        <dbReference type="ChEBI" id="CHEBI:18248"/>
    </ligandPart>
</feature>
<feature type="binding site" description="axial binding residue" evidence="2">
    <location>
        <position position="97"/>
    </location>
    <ligand>
        <name>heme b</name>
        <dbReference type="ChEBI" id="CHEBI:60344"/>
        <label>b566</label>
    </ligand>
    <ligandPart>
        <name>Fe</name>
        <dbReference type="ChEBI" id="CHEBI:18248"/>
    </ligandPart>
</feature>
<feature type="binding site" description="axial binding residue" evidence="2">
    <location>
        <position position="182"/>
    </location>
    <ligand>
        <name>heme b</name>
        <dbReference type="ChEBI" id="CHEBI:60344"/>
        <label>b562</label>
    </ligand>
    <ligandPart>
        <name>Fe</name>
        <dbReference type="ChEBI" id="CHEBI:18248"/>
    </ligandPart>
</feature>
<feature type="binding site" description="axial binding residue" evidence="2">
    <location>
        <position position="196"/>
    </location>
    <ligand>
        <name>heme b</name>
        <dbReference type="ChEBI" id="CHEBI:60344"/>
        <label>b566</label>
    </ligand>
    <ligandPart>
        <name>Fe</name>
        <dbReference type="ChEBI" id="CHEBI:18248"/>
    </ligandPart>
</feature>
<feature type="binding site" evidence="2">
    <location>
        <position position="201"/>
    </location>
    <ligand>
        <name>a ubiquinone</name>
        <dbReference type="ChEBI" id="CHEBI:16389"/>
    </ligand>
</feature>
<keyword id="KW-0249">Electron transport</keyword>
<keyword id="KW-0349">Heme</keyword>
<keyword id="KW-0408">Iron</keyword>
<keyword id="KW-0472">Membrane</keyword>
<keyword id="KW-0479">Metal-binding</keyword>
<keyword id="KW-0496">Mitochondrion</keyword>
<keyword id="KW-0999">Mitochondrion inner membrane</keyword>
<keyword id="KW-0679">Respiratory chain</keyword>
<keyword id="KW-0812">Transmembrane</keyword>
<keyword id="KW-1133">Transmembrane helix</keyword>
<keyword id="KW-0813">Transport</keyword>
<keyword id="KW-0830">Ubiquinone</keyword>
<comment type="function">
    <text evidence="2">Component of the ubiquinol-cytochrome c reductase complex (complex III or cytochrome b-c1 complex) that is part of the mitochondrial respiratory chain. The b-c1 complex mediates electron transfer from ubiquinol to cytochrome c. Contributes to the generation of a proton gradient across the mitochondrial membrane that is then used for ATP synthesis.</text>
</comment>
<comment type="cofactor">
    <cofactor evidence="2">
        <name>heme b</name>
        <dbReference type="ChEBI" id="CHEBI:60344"/>
    </cofactor>
    <text evidence="2">Binds 2 heme b groups non-covalently.</text>
</comment>
<comment type="subunit">
    <text evidence="2">The cytochrome bc1 complex contains 11 subunits: 3 respiratory subunits (MT-CYB, CYC1 and UQCRFS1), 2 core proteins (UQCRC1 and UQCRC2) and 6 low-molecular weight proteins (UQCRH/QCR6, UQCRB/QCR7, UQCRQ/QCR8, UQCR10/QCR9, UQCR11/QCR10 and a cleavage product of UQCRFS1). This cytochrome bc1 complex then forms a dimer.</text>
</comment>
<comment type="subcellular location">
    <subcellularLocation>
        <location evidence="2">Mitochondrion inner membrane</location>
        <topology evidence="2">Multi-pass membrane protein</topology>
    </subcellularLocation>
</comment>
<comment type="miscellaneous">
    <text evidence="1">Heme 1 (or BL or b562) is low-potential and absorbs at about 562 nm, and heme 2 (or BH or b566) is high-potential and absorbs at about 566 nm.</text>
</comment>
<comment type="similarity">
    <text evidence="3 4">Belongs to the cytochrome b family.</text>
</comment>
<comment type="caution">
    <text evidence="2">The full-length protein contains only eight transmembrane helices, not nine as predicted by bioinformatics tools.</text>
</comment>
<gene>
    <name type="primary">MT-CYB</name>
    <name type="synonym">COB</name>
    <name type="synonym">CYTB</name>
    <name type="synonym">MTCYB</name>
</gene>
<proteinExistence type="inferred from homology"/>
<sequence>MTNIRKTHPLIKIINHSFIDLPAPSNISAWWNFGSLLGICLVIQIITGLFLAMHYTSDTMTAFSSVTHICRDVNYGWLIRYMHANGASMFFICLFLHVGRGLYYGSYTYFETWNIGVILLFAVMATAFMGYVLPWGQMSFWGATVITNLLSAIPYIGTTLVEWIWGGFSVDKATLTRFFAFHFILPFIITALVMVHLLFLHETGSNNPSGLISDSDKIPFHPYYTIKDILGVLLLILILMMLVLFSPDLLGDPDNYTPANPLNTPPHIKPEWYFLFAYAILRSIPNKLGGVLALVLSILILMLFPILHMSKQRSMMFRPLSQCVFWILVADLFTLTWIGGQPVEYPFIIIGQLASILYFMIILLILPAISLFENTLLKW</sequence>
<name>CYB_TAMSE</name>
<reference key="1">
    <citation type="journal article" date="2001" name="Mol. Phylogenet. Evol.">
        <title>Molecular phylogeny of the chipmunks inferred from mitochondrial cytochrome b and cytochrome oxidase II gene sequences.</title>
        <authorList>
            <person name="Piaggio A.J."/>
            <person name="Spicer G.S."/>
        </authorList>
    </citation>
    <scope>NUCLEOTIDE SEQUENCE [GENOMIC DNA]</scope>
</reference>
<organism>
    <name type="scientific">Tamias senex</name>
    <name type="common">Allen's chipmunk</name>
    <name type="synonym">Neotamias senex</name>
    <dbReference type="NCBI Taxonomy" id="123794"/>
    <lineage>
        <taxon>Eukaryota</taxon>
        <taxon>Metazoa</taxon>
        <taxon>Chordata</taxon>
        <taxon>Craniata</taxon>
        <taxon>Vertebrata</taxon>
        <taxon>Euteleostomi</taxon>
        <taxon>Mammalia</taxon>
        <taxon>Eutheria</taxon>
        <taxon>Euarchontoglires</taxon>
        <taxon>Glires</taxon>
        <taxon>Rodentia</taxon>
        <taxon>Sciuromorpha</taxon>
        <taxon>Sciuridae</taxon>
        <taxon>Xerinae</taxon>
        <taxon>Marmotini</taxon>
        <taxon>Tamias</taxon>
    </lineage>
</organism>
<geneLocation type="mitochondrion"/>
<evidence type="ECO:0000250" key="1"/>
<evidence type="ECO:0000250" key="2">
    <source>
        <dbReference type="UniProtKB" id="P00157"/>
    </source>
</evidence>
<evidence type="ECO:0000255" key="3">
    <source>
        <dbReference type="PROSITE-ProRule" id="PRU00967"/>
    </source>
</evidence>
<evidence type="ECO:0000255" key="4">
    <source>
        <dbReference type="PROSITE-ProRule" id="PRU00968"/>
    </source>
</evidence>
<protein>
    <recommendedName>
        <fullName>Cytochrome b</fullName>
    </recommendedName>
    <alternativeName>
        <fullName>Complex III subunit 3</fullName>
    </alternativeName>
    <alternativeName>
        <fullName>Complex III subunit III</fullName>
    </alternativeName>
    <alternativeName>
        <fullName>Cytochrome b-c1 complex subunit 3</fullName>
    </alternativeName>
    <alternativeName>
        <fullName>Ubiquinol-cytochrome-c reductase complex cytochrome b subunit</fullName>
    </alternativeName>
</protein>
<accession>Q94Y47</accession>
<dbReference type="EMBL" id="AF147665">
    <property type="protein sequence ID" value="AAL14064.1"/>
    <property type="molecule type" value="Genomic_DNA"/>
</dbReference>
<dbReference type="SMR" id="Q94Y47"/>
<dbReference type="GO" id="GO:0005743">
    <property type="term" value="C:mitochondrial inner membrane"/>
    <property type="evidence" value="ECO:0007669"/>
    <property type="project" value="UniProtKB-SubCell"/>
</dbReference>
<dbReference type="GO" id="GO:0045275">
    <property type="term" value="C:respiratory chain complex III"/>
    <property type="evidence" value="ECO:0007669"/>
    <property type="project" value="InterPro"/>
</dbReference>
<dbReference type="GO" id="GO:0046872">
    <property type="term" value="F:metal ion binding"/>
    <property type="evidence" value="ECO:0007669"/>
    <property type="project" value="UniProtKB-KW"/>
</dbReference>
<dbReference type="GO" id="GO:0008121">
    <property type="term" value="F:ubiquinol-cytochrome-c reductase activity"/>
    <property type="evidence" value="ECO:0007669"/>
    <property type="project" value="InterPro"/>
</dbReference>
<dbReference type="GO" id="GO:0006122">
    <property type="term" value="P:mitochondrial electron transport, ubiquinol to cytochrome c"/>
    <property type="evidence" value="ECO:0007669"/>
    <property type="project" value="TreeGrafter"/>
</dbReference>
<dbReference type="CDD" id="cd00290">
    <property type="entry name" value="cytochrome_b_C"/>
    <property type="match status" value="1"/>
</dbReference>
<dbReference type="CDD" id="cd00284">
    <property type="entry name" value="Cytochrome_b_N"/>
    <property type="match status" value="1"/>
</dbReference>
<dbReference type="FunFam" id="1.20.810.10:FF:000002">
    <property type="entry name" value="Cytochrome b"/>
    <property type="match status" value="1"/>
</dbReference>
<dbReference type="Gene3D" id="1.20.810.10">
    <property type="entry name" value="Cytochrome Bc1 Complex, Chain C"/>
    <property type="match status" value="1"/>
</dbReference>
<dbReference type="InterPro" id="IPR005798">
    <property type="entry name" value="Cyt_b/b6_C"/>
</dbReference>
<dbReference type="InterPro" id="IPR036150">
    <property type="entry name" value="Cyt_b/b6_C_sf"/>
</dbReference>
<dbReference type="InterPro" id="IPR005797">
    <property type="entry name" value="Cyt_b/b6_N"/>
</dbReference>
<dbReference type="InterPro" id="IPR027387">
    <property type="entry name" value="Cytb/b6-like_sf"/>
</dbReference>
<dbReference type="InterPro" id="IPR030689">
    <property type="entry name" value="Cytochrome_b"/>
</dbReference>
<dbReference type="InterPro" id="IPR048260">
    <property type="entry name" value="Cytochrome_b_C_euk/bac"/>
</dbReference>
<dbReference type="InterPro" id="IPR048259">
    <property type="entry name" value="Cytochrome_b_N_euk/bac"/>
</dbReference>
<dbReference type="InterPro" id="IPR016174">
    <property type="entry name" value="Di-haem_cyt_TM"/>
</dbReference>
<dbReference type="PANTHER" id="PTHR19271">
    <property type="entry name" value="CYTOCHROME B"/>
    <property type="match status" value="1"/>
</dbReference>
<dbReference type="PANTHER" id="PTHR19271:SF16">
    <property type="entry name" value="CYTOCHROME B"/>
    <property type="match status" value="1"/>
</dbReference>
<dbReference type="Pfam" id="PF00032">
    <property type="entry name" value="Cytochrom_B_C"/>
    <property type="match status" value="1"/>
</dbReference>
<dbReference type="Pfam" id="PF00033">
    <property type="entry name" value="Cytochrome_B"/>
    <property type="match status" value="1"/>
</dbReference>
<dbReference type="PIRSF" id="PIRSF038885">
    <property type="entry name" value="COB"/>
    <property type="match status" value="1"/>
</dbReference>
<dbReference type="SUPFAM" id="SSF81648">
    <property type="entry name" value="a domain/subunit of cytochrome bc1 complex (Ubiquinol-cytochrome c reductase)"/>
    <property type="match status" value="1"/>
</dbReference>
<dbReference type="SUPFAM" id="SSF81342">
    <property type="entry name" value="Transmembrane di-heme cytochromes"/>
    <property type="match status" value="1"/>
</dbReference>
<dbReference type="PROSITE" id="PS51003">
    <property type="entry name" value="CYTB_CTER"/>
    <property type="match status" value="1"/>
</dbReference>
<dbReference type="PROSITE" id="PS51002">
    <property type="entry name" value="CYTB_NTER"/>
    <property type="match status" value="1"/>
</dbReference>